<keyword id="KW-0002">3D-structure</keyword>
<keyword id="KW-1185">Reference proteome</keyword>
<evidence type="ECO:0000255" key="1">
    <source>
        <dbReference type="PROSITE-ProRule" id="PRU00034"/>
    </source>
</evidence>
<evidence type="ECO:0000256" key="2">
    <source>
        <dbReference type="SAM" id="MobiDB-lite"/>
    </source>
</evidence>
<evidence type="ECO:0007829" key="3">
    <source>
        <dbReference type="PDB" id="8EUY"/>
    </source>
</evidence>
<proteinExistence type="evidence at protein level"/>
<feature type="chain" id="PRO_0000120261" description="Brix domain-containing protein C4F8.04">
    <location>
        <begin position="1"/>
        <end position="306"/>
    </location>
</feature>
<feature type="domain" description="Brix" evidence="1">
    <location>
        <begin position="94"/>
        <end position="283"/>
    </location>
</feature>
<feature type="region of interest" description="Disordered" evidence="2">
    <location>
        <begin position="16"/>
        <end position="49"/>
    </location>
</feature>
<feature type="compositionally biased region" description="Basic and acidic residues" evidence="2">
    <location>
        <begin position="21"/>
        <end position="42"/>
    </location>
</feature>
<feature type="helix" evidence="3">
    <location>
        <begin position="7"/>
        <end position="38"/>
    </location>
</feature>
<feature type="helix" evidence="3">
    <location>
        <begin position="40"/>
        <end position="49"/>
    </location>
</feature>
<feature type="turn" evidence="3">
    <location>
        <begin position="55"/>
        <end position="58"/>
    </location>
</feature>
<feature type="helix" evidence="3">
    <location>
        <begin position="72"/>
        <end position="78"/>
    </location>
</feature>
<feature type="helix" evidence="3">
    <location>
        <begin position="84"/>
        <end position="87"/>
    </location>
</feature>
<feature type="strand" evidence="3">
    <location>
        <begin position="96"/>
        <end position="100"/>
    </location>
</feature>
<feature type="helix" evidence="3">
    <location>
        <begin position="106"/>
        <end position="118"/>
    </location>
</feature>
<feature type="strand" evidence="3">
    <location>
        <begin position="122"/>
        <end position="124"/>
    </location>
</feature>
<feature type="helix" evidence="3">
    <location>
        <begin position="133"/>
        <end position="140"/>
    </location>
</feature>
<feature type="turn" evidence="3">
    <location>
        <begin position="141"/>
        <end position="144"/>
    </location>
</feature>
<feature type="strand" evidence="3">
    <location>
        <begin position="147"/>
        <end position="156"/>
    </location>
</feature>
<feature type="strand" evidence="3">
    <location>
        <begin position="158"/>
        <end position="165"/>
    </location>
</feature>
<feature type="turn" evidence="3">
    <location>
        <begin position="166"/>
        <end position="168"/>
    </location>
</feature>
<feature type="strand" evidence="3">
    <location>
        <begin position="171"/>
        <end position="180"/>
    </location>
</feature>
<feature type="helix" evidence="3">
    <location>
        <begin position="182"/>
        <end position="184"/>
    </location>
</feature>
<feature type="strand" evidence="3">
    <location>
        <begin position="197"/>
        <end position="201"/>
    </location>
</feature>
<feature type="helix" evidence="3">
    <location>
        <begin position="206"/>
        <end position="216"/>
    </location>
</feature>
<feature type="helix" evidence="3">
    <location>
        <begin position="225"/>
        <end position="227"/>
    </location>
</feature>
<feature type="strand" evidence="3">
    <location>
        <begin position="229"/>
        <end position="236"/>
    </location>
</feature>
<feature type="strand" evidence="3">
    <location>
        <begin position="239"/>
        <end position="250"/>
    </location>
</feature>
<feature type="strand" evidence="3">
    <location>
        <begin position="253"/>
        <end position="255"/>
    </location>
</feature>
<feature type="strand" evidence="3">
    <location>
        <begin position="260"/>
        <end position="265"/>
    </location>
</feature>
<feature type="strand" evidence="3">
    <location>
        <begin position="269"/>
        <end position="281"/>
    </location>
</feature>
<feature type="turn" evidence="3">
    <location>
        <begin position="284"/>
        <end position="286"/>
    </location>
</feature>
<feature type="strand" evidence="3">
    <location>
        <begin position="288"/>
        <end position="292"/>
    </location>
</feature>
<feature type="helix" evidence="3">
    <location>
        <begin position="297"/>
        <end position="299"/>
    </location>
</feature>
<organism>
    <name type="scientific">Schizosaccharomyces pombe (strain 972 / ATCC 24843)</name>
    <name type="common">Fission yeast</name>
    <dbReference type="NCBI Taxonomy" id="284812"/>
    <lineage>
        <taxon>Eukaryota</taxon>
        <taxon>Fungi</taxon>
        <taxon>Dikarya</taxon>
        <taxon>Ascomycota</taxon>
        <taxon>Taphrinomycotina</taxon>
        <taxon>Schizosaccharomycetes</taxon>
        <taxon>Schizosaccharomycetales</taxon>
        <taxon>Schizosaccharomycetaceae</taxon>
        <taxon>Schizosaccharomyces</taxon>
    </lineage>
</organism>
<gene>
    <name type="ORF">SPAC4F8.04</name>
</gene>
<accession>O14180</accession>
<reference key="1">
    <citation type="journal article" date="2002" name="Nature">
        <title>The genome sequence of Schizosaccharomyces pombe.</title>
        <authorList>
            <person name="Wood V."/>
            <person name="Gwilliam R."/>
            <person name="Rajandream M.A."/>
            <person name="Lyne M.H."/>
            <person name="Lyne R."/>
            <person name="Stewart A."/>
            <person name="Sgouros J.G."/>
            <person name="Peat N."/>
            <person name="Hayles J."/>
            <person name="Baker S.G."/>
            <person name="Basham D."/>
            <person name="Bowman S."/>
            <person name="Brooks K."/>
            <person name="Brown D."/>
            <person name="Brown S."/>
            <person name="Chillingworth T."/>
            <person name="Churcher C.M."/>
            <person name="Collins M."/>
            <person name="Connor R."/>
            <person name="Cronin A."/>
            <person name="Davis P."/>
            <person name="Feltwell T."/>
            <person name="Fraser A."/>
            <person name="Gentles S."/>
            <person name="Goble A."/>
            <person name="Hamlin N."/>
            <person name="Harris D.E."/>
            <person name="Hidalgo J."/>
            <person name="Hodgson G."/>
            <person name="Holroyd S."/>
            <person name="Hornsby T."/>
            <person name="Howarth S."/>
            <person name="Huckle E.J."/>
            <person name="Hunt S."/>
            <person name="Jagels K."/>
            <person name="James K.D."/>
            <person name="Jones L."/>
            <person name="Jones M."/>
            <person name="Leather S."/>
            <person name="McDonald S."/>
            <person name="McLean J."/>
            <person name="Mooney P."/>
            <person name="Moule S."/>
            <person name="Mungall K.L."/>
            <person name="Murphy L.D."/>
            <person name="Niblett D."/>
            <person name="Odell C."/>
            <person name="Oliver K."/>
            <person name="O'Neil S."/>
            <person name="Pearson D."/>
            <person name="Quail M.A."/>
            <person name="Rabbinowitsch E."/>
            <person name="Rutherford K.M."/>
            <person name="Rutter S."/>
            <person name="Saunders D."/>
            <person name="Seeger K."/>
            <person name="Sharp S."/>
            <person name="Skelton J."/>
            <person name="Simmonds M.N."/>
            <person name="Squares R."/>
            <person name="Squares S."/>
            <person name="Stevens K."/>
            <person name="Taylor K."/>
            <person name="Taylor R.G."/>
            <person name="Tivey A."/>
            <person name="Walsh S.V."/>
            <person name="Warren T."/>
            <person name="Whitehead S."/>
            <person name="Woodward J.R."/>
            <person name="Volckaert G."/>
            <person name="Aert R."/>
            <person name="Robben J."/>
            <person name="Grymonprez B."/>
            <person name="Weltjens I."/>
            <person name="Vanstreels E."/>
            <person name="Rieger M."/>
            <person name="Schaefer M."/>
            <person name="Mueller-Auer S."/>
            <person name="Gabel C."/>
            <person name="Fuchs M."/>
            <person name="Duesterhoeft A."/>
            <person name="Fritzc C."/>
            <person name="Holzer E."/>
            <person name="Moestl D."/>
            <person name="Hilbert H."/>
            <person name="Borzym K."/>
            <person name="Langer I."/>
            <person name="Beck A."/>
            <person name="Lehrach H."/>
            <person name="Reinhardt R."/>
            <person name="Pohl T.M."/>
            <person name="Eger P."/>
            <person name="Zimmermann W."/>
            <person name="Wedler H."/>
            <person name="Wambutt R."/>
            <person name="Purnelle B."/>
            <person name="Goffeau A."/>
            <person name="Cadieu E."/>
            <person name="Dreano S."/>
            <person name="Gloux S."/>
            <person name="Lelaure V."/>
            <person name="Mottier S."/>
            <person name="Galibert F."/>
            <person name="Aves S.J."/>
            <person name="Xiang Z."/>
            <person name="Hunt C."/>
            <person name="Moore K."/>
            <person name="Hurst S.M."/>
            <person name="Lucas M."/>
            <person name="Rochet M."/>
            <person name="Gaillardin C."/>
            <person name="Tallada V.A."/>
            <person name="Garzon A."/>
            <person name="Thode G."/>
            <person name="Daga R.R."/>
            <person name="Cruzado L."/>
            <person name="Jimenez J."/>
            <person name="Sanchez M."/>
            <person name="del Rey F."/>
            <person name="Benito J."/>
            <person name="Dominguez A."/>
            <person name="Revuelta J.L."/>
            <person name="Moreno S."/>
            <person name="Armstrong J."/>
            <person name="Forsburg S.L."/>
            <person name="Cerutti L."/>
            <person name="Lowe T."/>
            <person name="McCombie W.R."/>
            <person name="Paulsen I."/>
            <person name="Potashkin J."/>
            <person name="Shpakovski G.V."/>
            <person name="Ussery D."/>
            <person name="Barrell B.G."/>
            <person name="Nurse P."/>
        </authorList>
    </citation>
    <scope>NUCLEOTIDE SEQUENCE [LARGE SCALE GENOMIC DNA]</scope>
    <source>
        <strain>972 / ATCC 24843</strain>
    </source>
</reference>
<protein>
    <recommendedName>
        <fullName>Brix domain-containing protein C4F8.04</fullName>
    </recommendedName>
</protein>
<sequence>MGKIKNKIVRQQQYMKALHQKNKDKLERRKERAKEEEKDPEKKRLRLSENIPATIESKRVYDETIIEDKPDEELQAELKDDEFSAYFSEERKVPKLLVTTSKRASRKCYDFASELLDCFPNAEFRKRTGDIEVHEIAEAAAKRGYTDLLVLNEDRKKTNALTLVHLPNGPSFYFTLSNLQTAKEISNHGRSTGHIPELIINNFSTRLGMTVARAFQSLFIQTPQIQGRQVVTIHCQRDFLFFRRHRYAFREKSNMPDGIGTGLQELGPRFTMRLRMVQKGVWDRKEGEVFFESNAGEESDRRKFWL</sequence>
<dbReference type="EMBL" id="CU329670">
    <property type="protein sequence ID" value="CAB11051.1"/>
    <property type="molecule type" value="Genomic_DNA"/>
</dbReference>
<dbReference type="PIR" id="T38834">
    <property type="entry name" value="T38834"/>
</dbReference>
<dbReference type="PDB" id="8ESQ">
    <property type="method" value="EM"/>
    <property type="resolution" value="2.80 A"/>
    <property type="chains" value="x=1-306"/>
</dbReference>
<dbReference type="PDB" id="8ETH">
    <property type="method" value="EM"/>
    <property type="resolution" value="3.80 A"/>
    <property type="chains" value="x=1-306"/>
</dbReference>
<dbReference type="PDB" id="8ETI">
    <property type="method" value="EM"/>
    <property type="resolution" value="3.70 A"/>
    <property type="chains" value="x=1-306"/>
</dbReference>
<dbReference type="PDB" id="8EUP">
    <property type="method" value="EM"/>
    <property type="resolution" value="3.10 A"/>
    <property type="chains" value="x=1-306"/>
</dbReference>
<dbReference type="PDB" id="8EUY">
    <property type="method" value="EM"/>
    <property type="resolution" value="3.00 A"/>
    <property type="chains" value="x=1-306"/>
</dbReference>
<dbReference type="PDB" id="8EV3">
    <property type="method" value="EM"/>
    <property type="resolution" value="3.00 A"/>
    <property type="chains" value="x=1-306"/>
</dbReference>
<dbReference type="PDBsum" id="8ESQ"/>
<dbReference type="PDBsum" id="8ETH"/>
<dbReference type="PDBsum" id="8ETI"/>
<dbReference type="PDBsum" id="8EUP"/>
<dbReference type="PDBsum" id="8EUY"/>
<dbReference type="PDBsum" id="8EV3"/>
<dbReference type="SMR" id="O14180"/>
<dbReference type="BioGRID" id="279921">
    <property type="interactions" value="1"/>
</dbReference>
<dbReference type="FunCoup" id="O14180">
    <property type="interactions" value="630"/>
</dbReference>
<dbReference type="STRING" id="284812.O14180"/>
<dbReference type="iPTMnet" id="O14180"/>
<dbReference type="PaxDb" id="4896-SPAC4F8.04.1"/>
<dbReference type="EnsemblFungi" id="SPAC4F8.04.1">
    <property type="protein sequence ID" value="SPAC4F8.04.1:pep"/>
    <property type="gene ID" value="SPAC4F8.04"/>
</dbReference>
<dbReference type="KEGG" id="spo:2543503"/>
<dbReference type="PomBase" id="SPAC4F8.04"/>
<dbReference type="VEuPathDB" id="FungiDB:SPAC4F8.04"/>
<dbReference type="eggNOG" id="KOG2780">
    <property type="taxonomic scope" value="Eukaryota"/>
</dbReference>
<dbReference type="HOGENOM" id="CLU_040063_3_0_1"/>
<dbReference type="InParanoid" id="O14180"/>
<dbReference type="OMA" id="AWIISNK"/>
<dbReference type="PhylomeDB" id="O14180"/>
<dbReference type="PRO" id="PR:O14180"/>
<dbReference type="Proteomes" id="UP000002485">
    <property type="component" value="Chromosome I"/>
</dbReference>
<dbReference type="GO" id="GO:0005730">
    <property type="term" value="C:nucleolus"/>
    <property type="evidence" value="ECO:0007005"/>
    <property type="project" value="PomBase"/>
</dbReference>
<dbReference type="GO" id="GO:0005634">
    <property type="term" value="C:nucleus"/>
    <property type="evidence" value="ECO:0007005"/>
    <property type="project" value="PomBase"/>
</dbReference>
<dbReference type="GO" id="GO:0030684">
    <property type="term" value="C:preribosome"/>
    <property type="evidence" value="ECO:0000314"/>
    <property type="project" value="PomBase"/>
</dbReference>
<dbReference type="GO" id="GO:0030687">
    <property type="term" value="C:preribosome, large subunit precursor"/>
    <property type="evidence" value="ECO:0000318"/>
    <property type="project" value="GO_Central"/>
</dbReference>
<dbReference type="GO" id="GO:0005732">
    <property type="term" value="C:sno(s)RNA-containing ribonucleoprotein complex"/>
    <property type="evidence" value="ECO:0000250"/>
    <property type="project" value="PomBase"/>
</dbReference>
<dbReference type="GO" id="GO:0042134">
    <property type="term" value="F:rRNA primary transcript binding"/>
    <property type="evidence" value="ECO:0000266"/>
    <property type="project" value="PomBase"/>
</dbReference>
<dbReference type="GO" id="GO:1902626">
    <property type="term" value="P:assembly of large subunit precursor of preribosome"/>
    <property type="evidence" value="ECO:0000269"/>
    <property type="project" value="PomBase"/>
</dbReference>
<dbReference type="GO" id="GO:0180023">
    <property type="term" value="P:cytosolic large ribosomal subunit assembly"/>
    <property type="evidence" value="ECO:0000266"/>
    <property type="project" value="PomBase"/>
</dbReference>
<dbReference type="GO" id="GO:0000460">
    <property type="term" value="P:maturation of 5.8S rRNA"/>
    <property type="evidence" value="ECO:0000318"/>
    <property type="project" value="GO_Central"/>
</dbReference>
<dbReference type="GO" id="GO:0000466">
    <property type="term" value="P:maturation of 5.8S rRNA from tricistronic rRNA transcript (SSU-rRNA, 5.8S rRNA, LSU-rRNA)"/>
    <property type="evidence" value="ECO:0000266"/>
    <property type="project" value="PomBase"/>
</dbReference>
<dbReference type="GO" id="GO:0000470">
    <property type="term" value="P:maturation of LSU-rRNA"/>
    <property type="evidence" value="ECO:0000318"/>
    <property type="project" value="GO_Central"/>
</dbReference>
<dbReference type="GO" id="GO:0000463">
    <property type="term" value="P:maturation of LSU-rRNA from tricistronic rRNA transcript (SSU-rRNA, 5.8S rRNA, LSU-rRNA)"/>
    <property type="evidence" value="ECO:0000266"/>
    <property type="project" value="PomBase"/>
</dbReference>
<dbReference type="FunFam" id="3.40.50.10480:FF:000002">
    <property type="entry name" value="Ribosome production factor 1"/>
    <property type="match status" value="1"/>
</dbReference>
<dbReference type="Gene3D" id="3.40.50.10480">
    <property type="entry name" value="Probable brix-domain ribosomal biogenesis protein"/>
    <property type="match status" value="1"/>
</dbReference>
<dbReference type="InterPro" id="IPR007109">
    <property type="entry name" value="Brix"/>
</dbReference>
<dbReference type="InterPro" id="IPR044281">
    <property type="entry name" value="IMP4/RPF1"/>
</dbReference>
<dbReference type="PANTHER" id="PTHR22734:SF3">
    <property type="entry name" value="RIBOSOME PRODUCTION FACTOR 1"/>
    <property type="match status" value="1"/>
</dbReference>
<dbReference type="PANTHER" id="PTHR22734">
    <property type="entry name" value="U3 SMALL NUCLEOLAR RIBONUCLEOPROTEIN PROTEIN IMP4"/>
    <property type="match status" value="1"/>
</dbReference>
<dbReference type="Pfam" id="PF04427">
    <property type="entry name" value="Brix"/>
    <property type="match status" value="1"/>
</dbReference>
<dbReference type="SMART" id="SM00879">
    <property type="entry name" value="Brix"/>
    <property type="match status" value="1"/>
</dbReference>
<dbReference type="SUPFAM" id="SSF52954">
    <property type="entry name" value="Class II aaRS ABD-related"/>
    <property type="match status" value="1"/>
</dbReference>
<dbReference type="PROSITE" id="PS50833">
    <property type="entry name" value="BRIX"/>
    <property type="match status" value="1"/>
</dbReference>
<name>YDS4_SCHPO</name>